<geneLocation type="plasmid">
    <name>pKW301</name>
</geneLocation>
<organism>
    <name type="scientific">Acidiphilium multivorum (strain DSM 11245 / JCM 8867 / NBRC 100883 / AIU 301)</name>
    <dbReference type="NCBI Taxonomy" id="926570"/>
    <lineage>
        <taxon>Bacteria</taxon>
        <taxon>Pseudomonadati</taxon>
        <taxon>Pseudomonadota</taxon>
        <taxon>Alphaproteobacteria</taxon>
        <taxon>Acetobacterales</taxon>
        <taxon>Acidocellaceae</taxon>
        <taxon>Acidiphilium</taxon>
    </lineage>
</organism>
<sequence length="583" mass="63196">MKLLQNIPPYLFFTGKGGVGKTSISCATAIHLAEQGKRVLLVSTDPASNVGQVFDLAIGNTIRPVTAVPGLSALEIDPQEAARQYRARIVDPIKGLLPDDVVNSISEQLSGACTTEIAAFDEFTGLLTDASLLTRFDHIIFDTAPTGHTIRLLQLPGAWSSFIESNPDGASCLGPMAGLEKQREQYAHAVEALSDPERTRLVLVARLQNSTLQEVARTHEELAEIGLKNQYLVINGVLPEAEAEHDALAAAIWQREQEALANLPAGLSELPTDTLLLQPVNMVGVSALKGLLATRSEALPLPVTNILYTPENLSLSGLVDDIARSEHGLIMLMGKGGVGKTTMAAAIAVRLADMGFDVHLTTSDPAAHLSTTLNGSLKNLQVSRINPHDETERYRQHVLETKGRDLDEAGKRLLEEDLRSPCTEEIAVFQAFSRVIREAGKRFVVMDTAPTGHTLLLLDATGAYHREIAKKMGSKGHFTTPMMQLQDPDRTKVLLVTLPETTPVLEAANLQADLERAGIHPWGWIINNSLSIADTRSPLLCQRAQQELPQIEAVKNQHADRIALVPVLASEPAGIEKLRELMS</sequence>
<comment type="function">
    <text>Anion-transporting ATPase. Catalyzes the extrusion of the oxyanions arsenite, antimonite and arsenate. Maintenance of a low intracellular concentration of oxyanion produces resistance to the toxic agents.</text>
</comment>
<comment type="catalytic activity">
    <reaction>
        <text>arsenite(in) + ATP + H2O = arsenite(out) + ADP + phosphate + H(+)</text>
        <dbReference type="Rhea" id="RHEA:11348"/>
        <dbReference type="ChEBI" id="CHEBI:15377"/>
        <dbReference type="ChEBI" id="CHEBI:15378"/>
        <dbReference type="ChEBI" id="CHEBI:29242"/>
        <dbReference type="ChEBI" id="CHEBI:30616"/>
        <dbReference type="ChEBI" id="CHEBI:43474"/>
        <dbReference type="ChEBI" id="CHEBI:456216"/>
        <dbReference type="EC" id="7.3.2.7"/>
    </reaction>
</comment>
<comment type="similarity">
    <text evidence="2">Belongs to the arsA ATPase family.</text>
</comment>
<evidence type="ECO:0000255" key="1"/>
<evidence type="ECO:0000305" key="2"/>
<keyword id="KW-0059">Arsenical resistance</keyword>
<keyword id="KW-0067">ATP-binding</keyword>
<keyword id="KW-0547">Nucleotide-binding</keyword>
<keyword id="KW-0614">Plasmid</keyword>
<keyword id="KW-1278">Translocase</keyword>
<name>ARSA_ACIMA</name>
<protein>
    <recommendedName>
        <fullName>Arsenical pump-driving ATPase</fullName>
        <ecNumber>7.3.2.7</ecNumber>
    </recommendedName>
    <alternativeName>
        <fullName>Arsenical resistance ATPase</fullName>
    </alternativeName>
    <alternativeName>
        <fullName>Arsenite-translocating ATPase</fullName>
    </alternativeName>
    <alternativeName>
        <fullName>Arsenite-transporting ATPase</fullName>
    </alternativeName>
</protein>
<feature type="chain" id="PRO_0000152250" description="Arsenical pump-driving ATPase">
    <location>
        <begin position="1"/>
        <end position="583"/>
    </location>
</feature>
<feature type="binding site" evidence="1">
    <location>
        <begin position="15"/>
        <end position="22"/>
    </location>
    <ligand>
        <name>ATP</name>
        <dbReference type="ChEBI" id="CHEBI:30616"/>
    </ligand>
</feature>
<feature type="binding site" evidence="1">
    <location>
        <begin position="334"/>
        <end position="341"/>
    </location>
    <ligand>
        <name>ATP</name>
        <dbReference type="ChEBI" id="CHEBI:30616"/>
    </ligand>
</feature>
<dbReference type="EC" id="7.3.2.7"/>
<dbReference type="EMBL" id="AB004659">
    <property type="protein sequence ID" value="BAA24822.1"/>
    <property type="molecule type" value="Genomic_DNA"/>
</dbReference>
<dbReference type="SMR" id="O50593"/>
<dbReference type="GO" id="GO:0005524">
    <property type="term" value="F:ATP binding"/>
    <property type="evidence" value="ECO:0007669"/>
    <property type="project" value="UniProtKB-KW"/>
</dbReference>
<dbReference type="GO" id="GO:0016887">
    <property type="term" value="F:ATP hydrolysis activity"/>
    <property type="evidence" value="ECO:0007669"/>
    <property type="project" value="InterPro"/>
</dbReference>
<dbReference type="GO" id="GO:0015446">
    <property type="term" value="F:ATPase-coupled arsenite transmembrane transporter activity"/>
    <property type="evidence" value="ECO:0007669"/>
    <property type="project" value="UniProtKB-EC"/>
</dbReference>
<dbReference type="CDD" id="cd02035">
    <property type="entry name" value="ArsA"/>
    <property type="match status" value="2"/>
</dbReference>
<dbReference type="Gene3D" id="3.40.50.300">
    <property type="entry name" value="P-loop containing nucleotide triphosphate hydrolases"/>
    <property type="match status" value="2"/>
</dbReference>
<dbReference type="InterPro" id="IPR025723">
    <property type="entry name" value="Anion-transp_ATPase-like_dom"/>
</dbReference>
<dbReference type="InterPro" id="IPR027541">
    <property type="entry name" value="Ars_ATPase"/>
</dbReference>
<dbReference type="InterPro" id="IPR016300">
    <property type="entry name" value="ATPase_ArsA/GET3"/>
</dbReference>
<dbReference type="InterPro" id="IPR027417">
    <property type="entry name" value="P-loop_NTPase"/>
</dbReference>
<dbReference type="NCBIfam" id="TIGR04291">
    <property type="entry name" value="arsen_driv_ArsA"/>
    <property type="match status" value="1"/>
</dbReference>
<dbReference type="NCBIfam" id="TIGR00345">
    <property type="entry name" value="GET3_arsA_TRC40"/>
    <property type="match status" value="1"/>
</dbReference>
<dbReference type="PANTHER" id="PTHR10803">
    <property type="entry name" value="ARSENICAL PUMP-DRIVING ATPASE ARSENITE-TRANSLOCATING ATPASE"/>
    <property type="match status" value="1"/>
</dbReference>
<dbReference type="PANTHER" id="PTHR10803:SF3">
    <property type="entry name" value="ATPASE GET3"/>
    <property type="match status" value="1"/>
</dbReference>
<dbReference type="Pfam" id="PF02374">
    <property type="entry name" value="ArsA_ATPase"/>
    <property type="match status" value="3"/>
</dbReference>
<dbReference type="PIRSF" id="PIRSF001327">
    <property type="entry name" value="Arsenical_pump-driving_ATPase"/>
    <property type="match status" value="1"/>
</dbReference>
<dbReference type="SUPFAM" id="SSF52540">
    <property type="entry name" value="P-loop containing nucleoside triphosphate hydrolases"/>
    <property type="match status" value="2"/>
</dbReference>
<accession>O50593</accession>
<proteinExistence type="inferred from homology"/>
<reference key="1">
    <citation type="journal article" date="1998" name="Appl. Environ. Microbiol.">
        <title>Expression and regulation of the arsenic resistance operon of Acidiphilium multivorum AIU 301 plasmid pKW301 in Escherichia coli.</title>
        <authorList>
            <person name="Suzuki K."/>
            <person name="Wakao N."/>
            <person name="Kimura T."/>
            <person name="Sakka K."/>
            <person name="Ohmiya K."/>
        </authorList>
    </citation>
    <scope>NUCLEOTIDE SEQUENCE [GENOMIC DNA]</scope>
    <source>
        <strain>DSM 11245 / JCM 8867 / NBRC 100883 / AIU 301</strain>
    </source>
</reference>
<gene>
    <name type="primary">arsA</name>
</gene>